<proteinExistence type="inferred from homology"/>
<accession>A6VR57</accession>
<feature type="chain" id="PRO_1000126391" description="Small ribosomal subunit protein bS20">
    <location>
        <begin position="1"/>
        <end position="87"/>
    </location>
</feature>
<feature type="region of interest" description="Disordered" evidence="2">
    <location>
        <begin position="1"/>
        <end position="27"/>
    </location>
</feature>
<feature type="compositionally biased region" description="Basic residues" evidence="2">
    <location>
        <begin position="1"/>
        <end position="11"/>
    </location>
</feature>
<reference key="1">
    <citation type="journal article" date="2010" name="BMC Genomics">
        <title>A genomic perspective on the potential of Actinobacillus succinogenes for industrial succinate production.</title>
        <authorList>
            <person name="McKinlay J.B."/>
            <person name="Laivenieks M."/>
            <person name="Schindler B.D."/>
            <person name="McKinlay A.A."/>
            <person name="Siddaramappa S."/>
            <person name="Challacombe J.F."/>
            <person name="Lowry S.R."/>
            <person name="Clum A."/>
            <person name="Lapidus A.L."/>
            <person name="Burkhart K.B."/>
            <person name="Harkins V."/>
            <person name="Vieille C."/>
        </authorList>
    </citation>
    <scope>NUCLEOTIDE SEQUENCE [LARGE SCALE GENOMIC DNA]</scope>
    <source>
        <strain>ATCC 55618 / DSM 22257 / CCUG 43843 / 130Z</strain>
    </source>
</reference>
<evidence type="ECO:0000255" key="1">
    <source>
        <dbReference type="HAMAP-Rule" id="MF_00500"/>
    </source>
</evidence>
<evidence type="ECO:0000256" key="2">
    <source>
        <dbReference type="SAM" id="MobiDB-lite"/>
    </source>
</evidence>
<evidence type="ECO:0000305" key="3"/>
<dbReference type="EMBL" id="CP000746">
    <property type="protein sequence ID" value="ABR75454.1"/>
    <property type="molecule type" value="Genomic_DNA"/>
</dbReference>
<dbReference type="RefSeq" id="WP_012073830.1">
    <property type="nucleotide sequence ID" value="NC_009655.1"/>
</dbReference>
<dbReference type="SMR" id="A6VR57"/>
<dbReference type="STRING" id="339671.Asuc_2110"/>
<dbReference type="KEGG" id="asu:Asuc_2110"/>
<dbReference type="eggNOG" id="COG0268">
    <property type="taxonomic scope" value="Bacteria"/>
</dbReference>
<dbReference type="HOGENOM" id="CLU_160655_4_0_6"/>
<dbReference type="OrthoDB" id="9807974at2"/>
<dbReference type="Proteomes" id="UP000001114">
    <property type="component" value="Chromosome"/>
</dbReference>
<dbReference type="GO" id="GO:0005829">
    <property type="term" value="C:cytosol"/>
    <property type="evidence" value="ECO:0007669"/>
    <property type="project" value="TreeGrafter"/>
</dbReference>
<dbReference type="GO" id="GO:0015935">
    <property type="term" value="C:small ribosomal subunit"/>
    <property type="evidence" value="ECO:0007669"/>
    <property type="project" value="TreeGrafter"/>
</dbReference>
<dbReference type="GO" id="GO:0070181">
    <property type="term" value="F:small ribosomal subunit rRNA binding"/>
    <property type="evidence" value="ECO:0007669"/>
    <property type="project" value="TreeGrafter"/>
</dbReference>
<dbReference type="GO" id="GO:0003735">
    <property type="term" value="F:structural constituent of ribosome"/>
    <property type="evidence" value="ECO:0007669"/>
    <property type="project" value="InterPro"/>
</dbReference>
<dbReference type="GO" id="GO:0006412">
    <property type="term" value="P:translation"/>
    <property type="evidence" value="ECO:0007669"/>
    <property type="project" value="UniProtKB-UniRule"/>
</dbReference>
<dbReference type="FunFam" id="1.20.58.110:FF:000001">
    <property type="entry name" value="30S ribosomal protein S20"/>
    <property type="match status" value="1"/>
</dbReference>
<dbReference type="Gene3D" id="1.20.58.110">
    <property type="entry name" value="Ribosomal protein S20"/>
    <property type="match status" value="1"/>
</dbReference>
<dbReference type="HAMAP" id="MF_00500">
    <property type="entry name" value="Ribosomal_bS20"/>
    <property type="match status" value="1"/>
</dbReference>
<dbReference type="InterPro" id="IPR002583">
    <property type="entry name" value="Ribosomal_bS20"/>
</dbReference>
<dbReference type="InterPro" id="IPR036510">
    <property type="entry name" value="Ribosomal_bS20_sf"/>
</dbReference>
<dbReference type="NCBIfam" id="TIGR00029">
    <property type="entry name" value="S20"/>
    <property type="match status" value="1"/>
</dbReference>
<dbReference type="PANTHER" id="PTHR33398">
    <property type="entry name" value="30S RIBOSOMAL PROTEIN S20"/>
    <property type="match status" value="1"/>
</dbReference>
<dbReference type="PANTHER" id="PTHR33398:SF1">
    <property type="entry name" value="SMALL RIBOSOMAL SUBUNIT PROTEIN BS20C"/>
    <property type="match status" value="1"/>
</dbReference>
<dbReference type="Pfam" id="PF01649">
    <property type="entry name" value="Ribosomal_S20p"/>
    <property type="match status" value="1"/>
</dbReference>
<dbReference type="SUPFAM" id="SSF46992">
    <property type="entry name" value="Ribosomal protein S20"/>
    <property type="match status" value="1"/>
</dbReference>
<sequence>MANIKSAKKRAVQSEKRRQHNASQRSMMRTYIKKVYAAVAAGEKSAAQAAFLEMQKVVDRMASKGLIHANKAANHKSKLSAQIKKLA</sequence>
<keyword id="KW-1185">Reference proteome</keyword>
<keyword id="KW-0687">Ribonucleoprotein</keyword>
<keyword id="KW-0689">Ribosomal protein</keyword>
<keyword id="KW-0694">RNA-binding</keyword>
<keyword id="KW-0699">rRNA-binding</keyword>
<gene>
    <name evidence="1" type="primary">rpsT</name>
    <name type="ordered locus">Asuc_2110</name>
</gene>
<name>RS20_ACTSZ</name>
<protein>
    <recommendedName>
        <fullName evidence="1">Small ribosomal subunit protein bS20</fullName>
    </recommendedName>
    <alternativeName>
        <fullName evidence="3">30S ribosomal protein S20</fullName>
    </alternativeName>
</protein>
<comment type="function">
    <text evidence="1">Binds directly to 16S ribosomal RNA.</text>
</comment>
<comment type="similarity">
    <text evidence="1">Belongs to the bacterial ribosomal protein bS20 family.</text>
</comment>
<organism>
    <name type="scientific">Actinobacillus succinogenes (strain ATCC 55618 / DSM 22257 / CCUG 43843 / 130Z)</name>
    <dbReference type="NCBI Taxonomy" id="339671"/>
    <lineage>
        <taxon>Bacteria</taxon>
        <taxon>Pseudomonadati</taxon>
        <taxon>Pseudomonadota</taxon>
        <taxon>Gammaproteobacteria</taxon>
        <taxon>Pasteurellales</taxon>
        <taxon>Pasteurellaceae</taxon>
        <taxon>Actinobacillus</taxon>
    </lineage>
</organism>